<feature type="chain" id="PRO_0000069128" description="Beta-2 adrenergic receptor">
    <location>
        <begin position="1"/>
        <end position="415"/>
    </location>
</feature>
<feature type="topological domain" description="Extracellular" evidence="1">
    <location>
        <begin position="1"/>
        <end position="34"/>
    </location>
</feature>
<feature type="transmembrane region" description="Helical; Name=1" evidence="1">
    <location>
        <begin position="35"/>
        <end position="58"/>
    </location>
</feature>
<feature type="topological domain" description="Cytoplasmic" evidence="1">
    <location>
        <begin position="59"/>
        <end position="71"/>
    </location>
</feature>
<feature type="transmembrane region" description="Helical; Name=2" evidence="1">
    <location>
        <begin position="72"/>
        <end position="95"/>
    </location>
</feature>
<feature type="topological domain" description="Extracellular" evidence="1">
    <location>
        <begin position="96"/>
        <end position="106"/>
    </location>
</feature>
<feature type="transmembrane region" description="Helical; Name=3" evidence="1">
    <location>
        <begin position="107"/>
        <end position="129"/>
    </location>
</feature>
<feature type="topological domain" description="Cytoplasmic" evidence="1">
    <location>
        <begin position="130"/>
        <end position="150"/>
    </location>
</feature>
<feature type="transmembrane region" description="Helical; Name=4" evidence="1">
    <location>
        <begin position="151"/>
        <end position="174"/>
    </location>
</feature>
<feature type="topological domain" description="Extracellular" evidence="1">
    <location>
        <begin position="175"/>
        <end position="196"/>
    </location>
</feature>
<feature type="transmembrane region" description="Helical; Name=5" evidence="1">
    <location>
        <begin position="197"/>
        <end position="220"/>
    </location>
</feature>
<feature type="topological domain" description="Cytoplasmic" evidence="1">
    <location>
        <begin position="221"/>
        <end position="274"/>
    </location>
</feature>
<feature type="transmembrane region" description="Helical; Name=6" evidence="1">
    <location>
        <begin position="275"/>
        <end position="298"/>
    </location>
</feature>
<feature type="topological domain" description="Extracellular" evidence="1">
    <location>
        <begin position="299"/>
        <end position="305"/>
    </location>
</feature>
<feature type="transmembrane region" description="Helical; Name=7" evidence="1">
    <location>
        <begin position="306"/>
        <end position="329"/>
    </location>
</feature>
<feature type="topological domain" description="Cytoplasmic" evidence="1">
    <location>
        <begin position="330"/>
        <end position="415"/>
    </location>
</feature>
<feature type="region of interest" description="Disordered" evidence="5">
    <location>
        <begin position="379"/>
        <end position="415"/>
    </location>
</feature>
<feature type="short sequence motif" description="PDZ-binding">
    <location>
        <begin position="412"/>
        <end position="415"/>
    </location>
</feature>
<feature type="compositionally biased region" description="Polar residues" evidence="5">
    <location>
        <begin position="395"/>
        <end position="415"/>
    </location>
</feature>
<feature type="modified residue" description="Phosphotyrosine" evidence="2">
    <location>
        <position position="141"/>
    </location>
</feature>
<feature type="modified residue" description="Phosphoserine" evidence="2">
    <location>
        <position position="246"/>
    </location>
</feature>
<feature type="modified residue" description="Phosphoserine; by PKA" evidence="3">
    <location>
        <position position="261"/>
    </location>
</feature>
<feature type="modified residue" description="Phosphoserine; by PKA" evidence="3">
    <location>
        <position position="262"/>
    </location>
</feature>
<feature type="modified residue" description="Phosphoserine; by PKA" evidence="2">
    <location>
        <position position="345"/>
    </location>
</feature>
<feature type="modified residue" description="Phosphoserine; by PKA" evidence="2">
    <location>
        <position position="346"/>
    </location>
</feature>
<feature type="modified residue" description="Phosphoserine; by BARK" evidence="7">
    <location>
        <position position="355"/>
    </location>
</feature>
<feature type="modified residue" description="4-hydroxyproline" evidence="1">
    <location>
        <position position="387"/>
    </location>
</feature>
<feature type="modified residue" description="4-hydroxyproline" evidence="1">
    <location>
        <position position="397"/>
    </location>
</feature>
<feature type="lipid moiety-binding region" description="S-palmitoyl cysteine" evidence="2">
    <location>
        <position position="265"/>
    </location>
</feature>
<feature type="lipid moiety-binding region" description="S-palmitoyl cysteine" evidence="2">
    <location>
        <position position="341"/>
    </location>
</feature>
<feature type="glycosylation site" description="N-linked (GlcNAc...) asparagine" evidence="3">
    <location>
        <position position="6"/>
    </location>
</feature>
<feature type="glycosylation site" description="N-linked (GlcNAc...) asparagine" evidence="3">
    <location>
        <position position="15"/>
    </location>
</feature>
<feature type="disulfide bond" evidence="4">
    <location>
        <begin position="106"/>
        <end position="191"/>
    </location>
</feature>
<feature type="disulfide bond" evidence="4">
    <location>
        <begin position="184"/>
        <end position="190"/>
    </location>
</feature>
<organism>
    <name type="scientific">Canis lupus familiaris</name>
    <name type="common">Dog</name>
    <name type="synonym">Canis familiaris</name>
    <dbReference type="NCBI Taxonomy" id="9615"/>
    <lineage>
        <taxon>Eukaryota</taxon>
        <taxon>Metazoa</taxon>
        <taxon>Chordata</taxon>
        <taxon>Craniata</taxon>
        <taxon>Vertebrata</taxon>
        <taxon>Euteleostomi</taxon>
        <taxon>Mammalia</taxon>
        <taxon>Eutheria</taxon>
        <taxon>Laurasiatheria</taxon>
        <taxon>Carnivora</taxon>
        <taxon>Caniformia</taxon>
        <taxon>Canidae</taxon>
        <taxon>Canis</taxon>
    </lineage>
</organism>
<protein>
    <recommendedName>
        <fullName>Beta-2 adrenergic receptor</fullName>
    </recommendedName>
    <alternativeName>
        <fullName>Beta-2 adrenoreceptor</fullName>
        <shortName>Beta-2 adrenoceptor</shortName>
    </alternativeName>
</protein>
<reference key="1">
    <citation type="journal article" date="1996" name="J. Anim. Sci.">
        <title>Rapid communication: cloning and sequencing of a canine beta 2-adrenergic receptor cDNA.</title>
        <authorList>
            <person name="Emala C.W."/>
            <person name="Kuhl J."/>
            <person name="Hirshman C.A."/>
            <person name="Levine M.A."/>
        </authorList>
    </citation>
    <scope>NUCLEOTIDE SEQUENCE [MRNA]</scope>
    <source>
        <tissue>Heart muscle</tissue>
    </source>
</reference>
<reference key="2">
    <citation type="journal article" date="1997" name="J. Recept. Signal Transduct.">
        <title>Molecular cloning of the dog beta 1 and beta 2 adrenergic receptors.</title>
        <authorList>
            <person name="Huang R.-R.C."/>
            <person name="Rapoport D."/>
            <person name="Schaeffer M.-T."/>
            <person name="Cascieri M.A."/>
            <person name="Fong T.M."/>
        </authorList>
    </citation>
    <scope>NUCLEOTIDE SEQUENCE [GENOMIC DNA]</scope>
    <scope>FUNCTION</scope>
    <scope>SUBCELLULAR LOCATION</scope>
</reference>
<dbReference type="EMBL" id="X94608">
    <property type="protein sequence ID" value="CAA64316.1"/>
    <property type="molecule type" value="mRNA"/>
</dbReference>
<dbReference type="EMBL" id="U73206">
    <property type="protein sequence ID" value="AAB93647.1"/>
    <property type="molecule type" value="Genomic_DNA"/>
</dbReference>
<dbReference type="RefSeq" id="NP_001003234.1">
    <property type="nucleotide sequence ID" value="NM_001003234.1"/>
</dbReference>
<dbReference type="SMR" id="P54833"/>
<dbReference type="FunCoup" id="P54833">
    <property type="interactions" value="276"/>
</dbReference>
<dbReference type="STRING" id="9615.ENSCAFP00000027094"/>
<dbReference type="BindingDB" id="P54833"/>
<dbReference type="ChEMBL" id="CHEMBL2289"/>
<dbReference type="DrugCentral" id="P54833"/>
<dbReference type="GlyCosmos" id="P54833">
    <property type="glycosylation" value="2 sites, No reported glycans"/>
</dbReference>
<dbReference type="PaxDb" id="9612-ENSCAFP00000027094"/>
<dbReference type="GeneID" id="403910"/>
<dbReference type="KEGG" id="cfa:403910"/>
<dbReference type="CTD" id="154"/>
<dbReference type="eggNOG" id="KOG3656">
    <property type="taxonomic scope" value="Eukaryota"/>
</dbReference>
<dbReference type="InParanoid" id="P54833"/>
<dbReference type="OrthoDB" id="5975661at2759"/>
<dbReference type="PRO" id="PR:P54833"/>
<dbReference type="Proteomes" id="UP000002254">
    <property type="component" value="Unplaced"/>
</dbReference>
<dbReference type="Proteomes" id="UP000694429">
    <property type="component" value="Unplaced"/>
</dbReference>
<dbReference type="Proteomes" id="UP000694542">
    <property type="component" value="Unplaced"/>
</dbReference>
<dbReference type="Proteomes" id="UP000805418">
    <property type="component" value="Unplaced"/>
</dbReference>
<dbReference type="GO" id="GO:0005769">
    <property type="term" value="C:early endosome"/>
    <property type="evidence" value="ECO:0007669"/>
    <property type="project" value="UniProtKB-SubCell"/>
</dbReference>
<dbReference type="GO" id="GO:0005794">
    <property type="term" value="C:Golgi apparatus"/>
    <property type="evidence" value="ECO:0007669"/>
    <property type="project" value="UniProtKB-SubCell"/>
</dbReference>
<dbReference type="GO" id="GO:0005886">
    <property type="term" value="C:plasma membrane"/>
    <property type="evidence" value="ECO:0000318"/>
    <property type="project" value="GO_Central"/>
</dbReference>
<dbReference type="GO" id="GO:0043235">
    <property type="term" value="C:receptor complex"/>
    <property type="evidence" value="ECO:0000250"/>
    <property type="project" value="HGNC-UCL"/>
</dbReference>
<dbReference type="GO" id="GO:0004941">
    <property type="term" value="F:beta2-adrenergic receptor activity"/>
    <property type="evidence" value="ECO:0000250"/>
    <property type="project" value="HGNC-UCL"/>
</dbReference>
<dbReference type="GO" id="GO:0051380">
    <property type="term" value="F:norepinephrine binding"/>
    <property type="evidence" value="ECO:0000250"/>
    <property type="project" value="HGNC-UCL"/>
</dbReference>
<dbReference type="GO" id="GO:0042803">
    <property type="term" value="F:protein homodimerization activity"/>
    <property type="evidence" value="ECO:0000250"/>
    <property type="project" value="HGNC-UCL"/>
</dbReference>
<dbReference type="GO" id="GO:0071880">
    <property type="term" value="P:adenylate cyclase-activating adrenergic receptor signaling pathway"/>
    <property type="evidence" value="ECO:0000250"/>
    <property type="project" value="HGNC-UCL"/>
</dbReference>
<dbReference type="GO" id="GO:0045744">
    <property type="term" value="P:negative regulation of G protein-coupled receptor signaling pathway"/>
    <property type="evidence" value="ECO:0000250"/>
    <property type="project" value="HGNC-UCL"/>
</dbReference>
<dbReference type="GO" id="GO:0002025">
    <property type="term" value="P:norepinephrine-epinephrine-mediated vasodilation involved in regulation of systemic arterial blood pressure"/>
    <property type="evidence" value="ECO:0000318"/>
    <property type="project" value="GO_Central"/>
</dbReference>
<dbReference type="GO" id="GO:1901098">
    <property type="term" value="P:positive regulation of autophagosome maturation"/>
    <property type="evidence" value="ECO:0000250"/>
    <property type="project" value="GO_Central"/>
</dbReference>
<dbReference type="GO" id="GO:1904504">
    <property type="term" value="P:positive regulation of lipophagy"/>
    <property type="evidence" value="ECO:0000250"/>
    <property type="project" value="GO_Central"/>
</dbReference>
<dbReference type="GO" id="GO:0043410">
    <property type="term" value="P:positive regulation of MAPK cascade"/>
    <property type="evidence" value="ECO:0000250"/>
    <property type="project" value="HGNC-UCL"/>
</dbReference>
<dbReference type="GO" id="GO:0006898">
    <property type="term" value="P:receptor-mediated endocytosis"/>
    <property type="evidence" value="ECO:0000250"/>
    <property type="project" value="HGNC-UCL"/>
</dbReference>
<dbReference type="GO" id="GO:0006940">
    <property type="term" value="P:regulation of smooth muscle contraction"/>
    <property type="evidence" value="ECO:0007669"/>
    <property type="project" value="InterPro"/>
</dbReference>
<dbReference type="CDD" id="cd15957">
    <property type="entry name" value="7tmA_Beta2_AR"/>
    <property type="match status" value="1"/>
</dbReference>
<dbReference type="FunFam" id="1.20.1070.10:FF:000057">
    <property type="entry name" value="Beta-1 adrenergic receptor"/>
    <property type="match status" value="1"/>
</dbReference>
<dbReference type="Gene3D" id="1.20.1070.10">
    <property type="entry name" value="Rhodopsin 7-helix transmembrane proteins"/>
    <property type="match status" value="1"/>
</dbReference>
<dbReference type="InterPro" id="IPR002233">
    <property type="entry name" value="ADR_fam"/>
</dbReference>
<dbReference type="InterPro" id="IPR000332">
    <property type="entry name" value="ADRB2_rcpt"/>
</dbReference>
<dbReference type="InterPro" id="IPR000276">
    <property type="entry name" value="GPCR_Rhodpsn"/>
</dbReference>
<dbReference type="InterPro" id="IPR017452">
    <property type="entry name" value="GPCR_Rhodpsn_7TM"/>
</dbReference>
<dbReference type="PANTHER" id="PTHR24248">
    <property type="entry name" value="ADRENERGIC RECEPTOR-RELATED G-PROTEIN COUPLED RECEPTOR"/>
    <property type="match status" value="1"/>
</dbReference>
<dbReference type="PANTHER" id="PTHR24248:SF21">
    <property type="entry name" value="BETA-2 ADRENERGIC RECEPTOR"/>
    <property type="match status" value="1"/>
</dbReference>
<dbReference type="Pfam" id="PF00001">
    <property type="entry name" value="7tm_1"/>
    <property type="match status" value="1"/>
</dbReference>
<dbReference type="PRINTS" id="PR01103">
    <property type="entry name" value="ADRENERGICR"/>
</dbReference>
<dbReference type="PRINTS" id="PR00562">
    <property type="entry name" value="ADRENRGCB2AR"/>
</dbReference>
<dbReference type="PRINTS" id="PR00237">
    <property type="entry name" value="GPCRRHODOPSN"/>
</dbReference>
<dbReference type="SMART" id="SM01381">
    <property type="entry name" value="7TM_GPCR_Srsx"/>
    <property type="match status" value="1"/>
</dbReference>
<dbReference type="SUPFAM" id="SSF81321">
    <property type="entry name" value="Family A G protein-coupled receptor-like"/>
    <property type="match status" value="1"/>
</dbReference>
<dbReference type="PROSITE" id="PS00237">
    <property type="entry name" value="G_PROTEIN_RECEP_F1_1"/>
    <property type="match status" value="1"/>
</dbReference>
<dbReference type="PROSITE" id="PS50262">
    <property type="entry name" value="G_PROTEIN_RECEP_F1_2"/>
    <property type="match status" value="1"/>
</dbReference>
<evidence type="ECO:0000250" key="1"/>
<evidence type="ECO:0000250" key="2">
    <source>
        <dbReference type="UniProtKB" id="P07550"/>
    </source>
</evidence>
<evidence type="ECO:0000255" key="3"/>
<evidence type="ECO:0000255" key="4">
    <source>
        <dbReference type="PROSITE-ProRule" id="PRU00521"/>
    </source>
</evidence>
<evidence type="ECO:0000256" key="5">
    <source>
        <dbReference type="SAM" id="MobiDB-lite"/>
    </source>
</evidence>
<evidence type="ECO:0000269" key="6">
    <source>
    </source>
</evidence>
<evidence type="ECO:0000305" key="7"/>
<sequence length="415" mass="46589">MGQPANRSVFLLAPNGSHAPDQGDSQERSEAWVVGMGIVMSLIVLAIVFGNVLVITAIARFERLQTVTNYFITSLACADLVMGLAVVPFGASHILMKMWTFGNFWCEFWTSIDVLCVTASIETLCVIAVDRYFAITSPFKYQSLLTKNKARVVILMVWIVSGLTSFLPIQMHWYRATHQEAINCYAKETCCDFFTNQAYAIASSIVSFYLPLVVMVFVYSRVFQVAQRQLQKIDRSEGRFHAQNLSQVEQDGRSGHGHRRSSKFCLKEHKALKTLGIIMGTFTLCWLPFFIVNIVHVIQDNLIPKEVYILLNWVGYVNSAFNPLIYCRSPDFRIAFQELLCLRRSSLKAYGNGYSNNSNSRSDYAGEHSGCHLGQEKDSELLCEDPPGTEDRQGTVPSDSVDSQGRNCSTNDSLL</sequence>
<keyword id="KW-1003">Cell membrane</keyword>
<keyword id="KW-1015">Disulfide bond</keyword>
<keyword id="KW-0967">Endosome</keyword>
<keyword id="KW-0297">G-protein coupled receptor</keyword>
<keyword id="KW-0325">Glycoprotein</keyword>
<keyword id="KW-0333">Golgi apparatus</keyword>
<keyword id="KW-0379">Hydroxylation</keyword>
<keyword id="KW-0449">Lipoprotein</keyword>
<keyword id="KW-0472">Membrane</keyword>
<keyword id="KW-0564">Palmitate</keyword>
<keyword id="KW-0597">Phosphoprotein</keyword>
<keyword id="KW-0675">Receptor</keyword>
<keyword id="KW-1185">Reference proteome</keyword>
<keyword id="KW-0807">Transducer</keyword>
<keyword id="KW-0812">Transmembrane</keyword>
<keyword id="KW-1133">Transmembrane helix</keyword>
<keyword id="KW-0832">Ubl conjugation</keyword>
<comment type="function">
    <text evidence="6">Beta-adrenergic receptors mediate the catecholamine-induced activation of adenylate cyclase through the action of G proteins. The beta-2-adrenergic receptor binds epinephrine with an approximately 30-fold greater affinity than it does norepinephrine.</text>
</comment>
<comment type="subunit">
    <text evidence="2">Binds NHERF1 and GPRASP1. Interacts with ARRB1 and ARRB2. Interacts with SRC (By similarity). Interacts with USP20 and USP33 (By similarity). Interacts with VHL; the interaction, which is increased on hydroxylation of ADRB2, ubiquitinates ADRB2 leading to its degradation. Interacts with EGLN3; the interaction hydroxylates ADRB2 facilitating VHL-E3 ligase-mediated ubiquitination. Interacts (via PDZ-binding motif) with SNX27 (via PDZ domain); the interaction is required when endocytosed to prevent degradation in lysosomes and promote recycling to the plasma membrane. Interacts with CNIH4. Interacts with ARRDC3. Interacts with NEDD4 (By similarity). Interacts with MARCHF2 (By similarity).</text>
</comment>
<comment type="subcellular location">
    <subcellularLocation>
        <location evidence="2">Cell membrane</location>
        <topology evidence="2">Multi-pass membrane protein</topology>
    </subcellularLocation>
    <subcellularLocation>
        <location evidence="2">Early endosome</location>
    </subcellularLocation>
    <subcellularLocation>
        <location evidence="2">Golgi apparatus</location>
    </subcellularLocation>
    <text evidence="2">Colocalizes with VHL at the cell membrane. Activated receptors are internalized into endosomes prior to their degradation in lysosomes. Activated receptors are also detected within the Golgi apparatus.</text>
</comment>
<comment type="PTM">
    <text evidence="1">Palmitoylated; may reduce accessibility of Ser-345 and Ser-346 by anchoring Cys-341 to the plasma membrane. Agonist stimulation promotes depalmitoylation and further allows Ser-345 and Ser-346 phosphorylation (By similarity).</text>
</comment>
<comment type="PTM">
    <text>Phosphorylated by PKA and BARK upon agonist stimulation, which mediates homologous desensitization of the receptor. PKA-mediated phosphorylation seems to facilitate phosphorylation by BARK.</text>
</comment>
<comment type="PTM">
    <text evidence="1">Phosphorylation of Tyr-141 is induced by insulin and leads to supersensitization of the receptor.</text>
</comment>
<comment type="PTM">
    <text evidence="1">Polyubiquitinated. Agonist-induced ubiquitination leads to sort internalized receptors to the lysosomes for degradation. Deubiquitination by USP20 and USP33, leads to ADRB2 recycling and resensitization after prolonged agonist stimulation. USP20 and USP33 are constitutively associated and are dissociated immediately after agonist stimulation. Ubiquitination by the VHL-E3 ligase complex is oxygen-dependent (By similarity).</text>
</comment>
<comment type="PTM">
    <text evidence="1">Hydroxylation by EGLN3 occurs only under normoxia and increases the interaction with VHL and the subsequent ubiquitination and degradation of ADRB2.</text>
</comment>
<comment type="PTM">
    <text evidence="2">Palmitoylated. Mainly palmitoylated at Cys-341. Palmitoylation may reduce accessibility of phosphorylation sites by anchoring the receptor to the plasma membrane. Agonist stimulation promotes depalmitoylation and further allows Ser-345 and Ser-346 phosphorylation. Also undergoes transient, ligand-induced palmitoylation at Cys-265 probably by ZDHHC9, ZDHHC14 and ZDHHC18 within the Golgi. Palmitoylation at Cys-265 requires phosphorylation by PKA and receptor internalization and stabilizes the receptor. Could be depalmitoylated by LYPLA1 at the plasma membrane.</text>
</comment>
<comment type="similarity">
    <text evidence="4">Belongs to the G-protein coupled receptor 1 family. Adrenergic receptor subfamily. ADRB2 sub-subfamily.</text>
</comment>
<name>ADRB2_CANLF</name>
<accession>P54833</accession>
<proteinExistence type="evidence at transcript level"/>
<gene>
    <name type="primary">ADRB2</name>
</gene>